<dbReference type="EMBL" id="CP000159">
    <property type="protein sequence ID" value="ABC45863.1"/>
    <property type="molecule type" value="Genomic_DNA"/>
</dbReference>
<dbReference type="RefSeq" id="WP_011403812.1">
    <property type="nucleotide sequence ID" value="NC_007677.1"/>
</dbReference>
<dbReference type="RefSeq" id="YP_445184.1">
    <property type="nucleotide sequence ID" value="NC_007677.1"/>
</dbReference>
<dbReference type="SMR" id="Q2S3P7"/>
<dbReference type="STRING" id="309807.SRU_1052"/>
<dbReference type="EnsemblBacteria" id="ABC45863">
    <property type="protein sequence ID" value="ABC45863"/>
    <property type="gene ID" value="SRU_1052"/>
</dbReference>
<dbReference type="GeneID" id="83727981"/>
<dbReference type="KEGG" id="sru:SRU_1052"/>
<dbReference type="PATRIC" id="fig|309807.25.peg.1090"/>
<dbReference type="eggNOG" id="COG0098">
    <property type="taxonomic scope" value="Bacteria"/>
</dbReference>
<dbReference type="HOGENOM" id="CLU_065898_2_2_10"/>
<dbReference type="OrthoDB" id="9809045at2"/>
<dbReference type="Proteomes" id="UP000008674">
    <property type="component" value="Chromosome"/>
</dbReference>
<dbReference type="GO" id="GO:0015935">
    <property type="term" value="C:small ribosomal subunit"/>
    <property type="evidence" value="ECO:0007669"/>
    <property type="project" value="InterPro"/>
</dbReference>
<dbReference type="GO" id="GO:0019843">
    <property type="term" value="F:rRNA binding"/>
    <property type="evidence" value="ECO:0007669"/>
    <property type="project" value="UniProtKB-UniRule"/>
</dbReference>
<dbReference type="GO" id="GO:0003735">
    <property type="term" value="F:structural constituent of ribosome"/>
    <property type="evidence" value="ECO:0007669"/>
    <property type="project" value="InterPro"/>
</dbReference>
<dbReference type="GO" id="GO:0006412">
    <property type="term" value="P:translation"/>
    <property type="evidence" value="ECO:0007669"/>
    <property type="project" value="UniProtKB-UniRule"/>
</dbReference>
<dbReference type="FunFam" id="3.30.160.20:FF:000001">
    <property type="entry name" value="30S ribosomal protein S5"/>
    <property type="match status" value="1"/>
</dbReference>
<dbReference type="FunFam" id="3.30.230.10:FF:000002">
    <property type="entry name" value="30S ribosomal protein S5"/>
    <property type="match status" value="1"/>
</dbReference>
<dbReference type="Gene3D" id="3.30.160.20">
    <property type="match status" value="1"/>
</dbReference>
<dbReference type="Gene3D" id="3.30.230.10">
    <property type="match status" value="1"/>
</dbReference>
<dbReference type="HAMAP" id="MF_01307_B">
    <property type="entry name" value="Ribosomal_uS5_B"/>
    <property type="match status" value="1"/>
</dbReference>
<dbReference type="InterPro" id="IPR020568">
    <property type="entry name" value="Ribosomal_Su5_D2-typ_SF"/>
</dbReference>
<dbReference type="InterPro" id="IPR000851">
    <property type="entry name" value="Ribosomal_uS5"/>
</dbReference>
<dbReference type="InterPro" id="IPR005712">
    <property type="entry name" value="Ribosomal_uS5_bac-type"/>
</dbReference>
<dbReference type="InterPro" id="IPR005324">
    <property type="entry name" value="Ribosomal_uS5_C"/>
</dbReference>
<dbReference type="InterPro" id="IPR013810">
    <property type="entry name" value="Ribosomal_uS5_N"/>
</dbReference>
<dbReference type="InterPro" id="IPR018192">
    <property type="entry name" value="Ribosomal_uS5_N_CS"/>
</dbReference>
<dbReference type="InterPro" id="IPR014721">
    <property type="entry name" value="Ribsml_uS5_D2-typ_fold_subgr"/>
</dbReference>
<dbReference type="NCBIfam" id="TIGR01021">
    <property type="entry name" value="rpsE_bact"/>
    <property type="match status" value="1"/>
</dbReference>
<dbReference type="PANTHER" id="PTHR48432">
    <property type="entry name" value="S5 DRBM DOMAIN-CONTAINING PROTEIN"/>
    <property type="match status" value="1"/>
</dbReference>
<dbReference type="PANTHER" id="PTHR48432:SF1">
    <property type="entry name" value="S5 DRBM DOMAIN-CONTAINING PROTEIN"/>
    <property type="match status" value="1"/>
</dbReference>
<dbReference type="Pfam" id="PF00333">
    <property type="entry name" value="Ribosomal_S5"/>
    <property type="match status" value="1"/>
</dbReference>
<dbReference type="Pfam" id="PF03719">
    <property type="entry name" value="Ribosomal_S5_C"/>
    <property type="match status" value="1"/>
</dbReference>
<dbReference type="SUPFAM" id="SSF54768">
    <property type="entry name" value="dsRNA-binding domain-like"/>
    <property type="match status" value="1"/>
</dbReference>
<dbReference type="SUPFAM" id="SSF54211">
    <property type="entry name" value="Ribosomal protein S5 domain 2-like"/>
    <property type="match status" value="1"/>
</dbReference>
<dbReference type="PROSITE" id="PS00585">
    <property type="entry name" value="RIBOSOMAL_S5"/>
    <property type="match status" value="1"/>
</dbReference>
<dbReference type="PROSITE" id="PS50881">
    <property type="entry name" value="S5_DSRBD"/>
    <property type="match status" value="1"/>
</dbReference>
<evidence type="ECO:0000255" key="1">
    <source>
        <dbReference type="HAMAP-Rule" id="MF_01307"/>
    </source>
</evidence>
<evidence type="ECO:0000305" key="2"/>
<protein>
    <recommendedName>
        <fullName evidence="1">Small ribosomal subunit protein uS5</fullName>
    </recommendedName>
    <alternativeName>
        <fullName evidence="2">30S ribosomal protein S5</fullName>
    </alternativeName>
</protein>
<proteinExistence type="inferred from homology"/>
<gene>
    <name evidence="1" type="primary">rpsE</name>
    <name type="ordered locus">SRU_1052</name>
</gene>
<keyword id="KW-1185">Reference proteome</keyword>
<keyword id="KW-0687">Ribonucleoprotein</keyword>
<keyword id="KW-0689">Ribosomal protein</keyword>
<keyword id="KW-0694">RNA-binding</keyword>
<keyword id="KW-0699">rRNA-binding</keyword>
<comment type="function">
    <text evidence="1">With S4 and S12 plays an important role in translational accuracy.</text>
</comment>
<comment type="function">
    <text evidence="1">Located at the back of the 30S subunit body where it stabilizes the conformation of the head with respect to the body.</text>
</comment>
<comment type="subunit">
    <text evidence="1">Part of the 30S ribosomal subunit. Contacts proteins S4 and S8.</text>
</comment>
<comment type="domain">
    <text>The N-terminal domain interacts with the head of the 30S subunit; the C-terminal domain interacts with the body and contacts protein S4. The interaction surface between S4 and S5 is involved in control of translational fidelity.</text>
</comment>
<comment type="similarity">
    <text evidence="1">Belongs to the universal ribosomal protein uS5 family.</text>
</comment>
<name>RS5_SALRD</name>
<feature type="chain" id="PRO_0000323191" description="Small ribosomal subunit protein uS5">
    <location>
        <begin position="1"/>
        <end position="175"/>
    </location>
</feature>
<feature type="domain" description="S5 DRBM" evidence="1">
    <location>
        <begin position="19"/>
        <end position="82"/>
    </location>
</feature>
<accession>Q2S3P7</accession>
<organism>
    <name type="scientific">Salinibacter ruber (strain DSM 13855 / M31)</name>
    <dbReference type="NCBI Taxonomy" id="309807"/>
    <lineage>
        <taxon>Bacteria</taxon>
        <taxon>Pseudomonadati</taxon>
        <taxon>Rhodothermota</taxon>
        <taxon>Rhodothermia</taxon>
        <taxon>Rhodothermales</taxon>
        <taxon>Salinibacteraceae</taxon>
        <taxon>Salinibacter</taxon>
    </lineage>
</organism>
<reference key="1">
    <citation type="journal article" date="2005" name="Proc. Natl. Acad. Sci. U.S.A.">
        <title>The genome of Salinibacter ruber: convergence and gene exchange among hyperhalophilic bacteria and archaea.</title>
        <authorList>
            <person name="Mongodin E.F."/>
            <person name="Nelson K.E."/>
            <person name="Daugherty S."/>
            <person name="DeBoy R.T."/>
            <person name="Wister J."/>
            <person name="Khouri H."/>
            <person name="Weidman J."/>
            <person name="Walsh D.A."/>
            <person name="Papke R.T."/>
            <person name="Sanchez Perez G."/>
            <person name="Sharma A.K."/>
            <person name="Nesbo C.L."/>
            <person name="MacLeod D."/>
            <person name="Bapteste E."/>
            <person name="Doolittle W.F."/>
            <person name="Charlebois R.L."/>
            <person name="Legault B."/>
            <person name="Rodriguez-Valera F."/>
        </authorList>
    </citation>
    <scope>NUCLEOTIDE SEQUENCE [LARGE SCALE GENOMIC DNA]</scope>
    <source>
        <strain>DSM 13855 / CECT 5946 / M31</strain>
    </source>
</reference>
<sequence length="175" mass="18693">MADRKEQKRVNAEKRQENWVDRLVSVNRVSKVVKGGRRFSFNTVVVVGNEDGLVGTGLGKANEVSSAISKGADDAKKNVIRVPMRDGTIPHKVVGKQDAGKVLLKPASPGTGVIAGGGVRAVLECAGYRNVLTKSLGTSNPHNQVKATINALAETEDALEVARRRDIPLEKVFNG</sequence>